<sequence length="2226" mass="256529">MPSKYGNGSGTGRFVKNSTIKSEFRNNGYNRAEVIDPSIANNPMLNDSIQKRELVNRIDQLDSIMGFDRIEHGEMDGAKPRRGWLVNMHATTIPTDEYLAGYSGVDYYFLDEEGGSFKATIRYDPYFYLVVIPGHESEVEEMLRKVLEPCSLKGLLRVAKEDLSLPNHLVGLKKTLVKLSFHNVVDLLSARRLLNPIIKDNKMKRDTRDIYQVMNFNNVNNANGTEIQTNFNDKSTEQIADPATLIDDIREYDVPYHVRVSIDEKIRVGKWYNVFVKHSEVRLEEDKEKIAFADPVILAFDIETTKAPLKFPDAKTDQIMMISYMIDGEGFLITNREIISEDIEDFEYTPKPEYPGLFTIFNEPDEKMVLVRFFEHIRDSRPTVIATFNGDFFDWPFVEKRTTFHDMDMFEEIGFAKDNEGEYKSKYCVHMDCYRWVKRDSYLPQGSQGLKAVTTAKLGYNPTELDPELMTPYAYEKPQLLSEYSVSDAVATYYLYYKYVHPFIFSLCTIIPLNPDEVLRKGTGTLCEMLLMVQAYENGIVLPNKHTEPIERFYDGHLLESETYVGGHVESLEAGVFRSDLPNDFKVDPTAVDEILGDLHNALKFCIEVENNKKVEDVENYDEVYNQIKDSLVNLRETPIRHENPLIFHVDVASMYPNIMTSNRLQPDSMKSEEDCAACDFNRPGKNCDRRLPWSWRGEYYPAEMNEYGMIKRTLQNETFPPAKPWLPAKTFDELSYSEQASLIKKRLSDYSRKVYHRIKQSKTVSREAIVCQRENPFYVDTVRSFRDRRYEFKTLVKVWKGKTAKIDKHDTIAKDEAKKMVVLYDSLQLAHKVILNSFYGYVMRKGSRWYSMEMAGITCLTGATIIQMARSLVERLGRPLELDTDGIWCILPKSFPENYYFKCKDGKNIFLEYPCSMLNYLVHDKFTNHQYQDLVDPNTFKYKTRSENSIFFEVDGPYKAMVLPTSKEEGKGLKKRYAVFNDDGSLAELKGFELKRRGELQLIKNFQSDIFKLFLDGDSLENCYKSVATVANNWLDVLDTKGGMLEDEDLIELICENRSMSKSLAEYGNQKSTSITTAKRLGEFLGEEMIKDAGLACKYIISSKPIGSPVTERAVPVSIFSSEKKEFFLKKWLKDPSLENFDPRSVIDWNYYYERLASVVQKIISIPAALQDIKNPVPRVPHPEWLQKKINSKEDSKQQSSISSFFGQATKKEVLQKSIKSIQDIEDFGELDASIPKGRVSKVTSRKRRNGKANNVSDSEEEERNNAILNGECPSMTEDYAGFLQYQKAKWKVQEKNRERRKKLFGSNAESSHRSSVGGIIRRQAENIAGSDWEILEYKADPSKPGDIKVYVSASNKVHSFTFHVPKKVYASFKTELSPKKAIRNCEIEKSTAVLPNGHDGSNLYKLTMPEETYLEESTKVESLLQDSNILGLYETQVGAVERAIIDLGNNIRFDDTKVGALGKGLKNGFNVKDLMKVERDSYLKRFGMDIIYFLHLVTNSYEFFTIFKSWENTASIFVLKPSANAQELPSNMDKIYREIFEAKKDRLGKMYSIIEYPDEMKFETTYFHDTAKIFKKMDNCISKIYESRSNRALLAVQSPYTTKVLNLLKSTSSFPTIKMNVSELSLPAVGWQSLIIKRVVNHYFVLASWIKKLISLAKYGNVPLCNLQIENMGYLIDIEYARRLSQSNIVLWLSSRPLPDHGGFEMDKAQDFENLEFPTINNPEIYETACLEVEIGTLTINTILTSALINEAEGTDLADDAVQFDNNNGASTIAEDSFSTPALSILRGMVKDWWDDALKNNDNADSMMNNLVTWVQRSDSLLYDYSLHYHVHNLTTKALLQLIGEFKRMNAQVIFANRNKMLIQTTKVSIENSYAYGQYILKAARSKPLFNFLDLRIVKYWDLLVWMDEYNFGGRCCTEITNDEVQNLIPVNKWQITKFLPVIFQNEFEDWLIIFLDSLTKFKNDTLIPGTQTGTPRVTQIAHILKGQKKLDSNETEEESISNGVMELFRKPLQKRIEKLARRQNESILNPELRQEYEFPKLPGSYTSMKNPSLELVKFLCAVFGLSRKRNIEVRLLRRELLSIFDIKEFSDEAAFKNPSSSLKIPHVICDYCNYIRDIDFCRDEQKNIWNCSNCNKTYNRVAIEEELVAQYNKLLTKFYIQDLKCSKCHQIKSDNMSEYCKCSGKWTETLKYTEVDKRLQIFSNVGGFFNLQLLKGIIEELAL</sequence>
<comment type="function">
    <text evidence="1">DNA polymerase II participates in chromosomal DNA replication.</text>
</comment>
<comment type="catalytic activity">
    <reaction evidence="2">
        <text>DNA(n) + a 2'-deoxyribonucleoside 5'-triphosphate = DNA(n+1) + diphosphate</text>
        <dbReference type="Rhea" id="RHEA:22508"/>
        <dbReference type="Rhea" id="RHEA-COMP:17339"/>
        <dbReference type="Rhea" id="RHEA-COMP:17340"/>
        <dbReference type="ChEBI" id="CHEBI:33019"/>
        <dbReference type="ChEBI" id="CHEBI:61560"/>
        <dbReference type="ChEBI" id="CHEBI:173112"/>
        <dbReference type="EC" id="2.7.7.7"/>
    </reaction>
</comment>
<comment type="cofactor">
    <cofactor evidence="2">
        <name>[4Fe-4S] cluster</name>
        <dbReference type="ChEBI" id="CHEBI:49883"/>
    </cofactor>
    <text evidence="2">Binds 1 [4Fe-4S] cluster.</text>
</comment>
<comment type="subunit">
    <text evidence="1">Heterotetramer. Consists of 4 subunits: POL2, DPB2, DPB3 and DPB4 (By similarity).</text>
</comment>
<comment type="subcellular location">
    <subcellularLocation>
        <location evidence="1">Nucleus</location>
    </subcellularLocation>
</comment>
<comment type="domain">
    <text evidence="2">The CysA-type zinc finger is required for PCNA-binding.</text>
</comment>
<comment type="domain">
    <text evidence="2">The CysB motif binds 1 4Fe-4S cluster and is required for the formation of polymerase complexes.</text>
</comment>
<comment type="similarity">
    <text evidence="4">Belongs to the DNA polymerase type-B family.</text>
</comment>
<protein>
    <recommendedName>
        <fullName>DNA polymerase epsilon catalytic subunit A</fullName>
        <ecNumber evidence="2">2.7.7.7</ecNumber>
    </recommendedName>
    <alternativeName>
        <fullName>DNA polymerase II subunit A</fullName>
    </alternativeName>
</protein>
<accession>Q6BNG2</accession>
<accession>B5RU53</accession>
<name>DPOE_DEBHA</name>
<dbReference type="EC" id="2.7.7.7" evidence="2"/>
<dbReference type="EMBL" id="CR382137">
    <property type="protein sequence ID" value="CAR65865.1"/>
    <property type="molecule type" value="Genomic_DNA"/>
</dbReference>
<dbReference type="RefSeq" id="XP_002770523.1">
    <property type="nucleotide sequence ID" value="XM_002770477.1"/>
</dbReference>
<dbReference type="SMR" id="Q6BNG2"/>
<dbReference type="FunCoup" id="Q6BNG2">
    <property type="interactions" value="765"/>
</dbReference>
<dbReference type="STRING" id="284592.Q6BNG2"/>
<dbReference type="GeneID" id="8998818"/>
<dbReference type="KEGG" id="dha:DEHA2E22000g"/>
<dbReference type="VEuPathDB" id="FungiDB:DEHA2E22000g"/>
<dbReference type="eggNOG" id="KOG1798">
    <property type="taxonomic scope" value="Eukaryota"/>
</dbReference>
<dbReference type="HOGENOM" id="CLU_000556_0_1_1"/>
<dbReference type="InParanoid" id="Q6BNG2"/>
<dbReference type="OMA" id="MLDQCRY"/>
<dbReference type="OrthoDB" id="10060449at2759"/>
<dbReference type="Proteomes" id="UP000000599">
    <property type="component" value="Chromosome E"/>
</dbReference>
<dbReference type="GO" id="GO:0140445">
    <property type="term" value="C:chromosome, telomeric repeat region"/>
    <property type="evidence" value="ECO:0007669"/>
    <property type="project" value="EnsemblFungi"/>
</dbReference>
<dbReference type="GO" id="GO:0008622">
    <property type="term" value="C:epsilon DNA polymerase complex"/>
    <property type="evidence" value="ECO:0007669"/>
    <property type="project" value="EnsemblFungi"/>
</dbReference>
<dbReference type="GO" id="GO:0043596">
    <property type="term" value="C:nuclear replication fork"/>
    <property type="evidence" value="ECO:0007669"/>
    <property type="project" value="EnsemblFungi"/>
</dbReference>
<dbReference type="GO" id="GO:0051539">
    <property type="term" value="F:4 iron, 4 sulfur cluster binding"/>
    <property type="evidence" value="ECO:0007669"/>
    <property type="project" value="UniProtKB-KW"/>
</dbReference>
<dbReference type="GO" id="GO:0003887">
    <property type="term" value="F:DNA-directed DNA polymerase activity"/>
    <property type="evidence" value="ECO:0007669"/>
    <property type="project" value="UniProtKB-KW"/>
</dbReference>
<dbReference type="GO" id="GO:0003690">
    <property type="term" value="F:double-stranded DNA binding"/>
    <property type="evidence" value="ECO:0007669"/>
    <property type="project" value="EnsemblFungi"/>
</dbReference>
<dbReference type="GO" id="GO:0000166">
    <property type="term" value="F:nucleotide binding"/>
    <property type="evidence" value="ECO:0007669"/>
    <property type="project" value="InterPro"/>
</dbReference>
<dbReference type="GO" id="GO:0008310">
    <property type="term" value="F:single-stranded DNA 3'-5' DNA exonuclease activity"/>
    <property type="evidence" value="ECO:0007669"/>
    <property type="project" value="EnsemblFungi"/>
</dbReference>
<dbReference type="GO" id="GO:0003697">
    <property type="term" value="F:single-stranded DNA binding"/>
    <property type="evidence" value="ECO:0007669"/>
    <property type="project" value="EnsemblFungi"/>
</dbReference>
<dbReference type="GO" id="GO:0032183">
    <property type="term" value="F:SUMO binding"/>
    <property type="evidence" value="ECO:0007669"/>
    <property type="project" value="EnsemblFungi"/>
</dbReference>
<dbReference type="GO" id="GO:0008270">
    <property type="term" value="F:zinc ion binding"/>
    <property type="evidence" value="ECO:0007669"/>
    <property type="project" value="UniProtKB-KW"/>
</dbReference>
<dbReference type="GO" id="GO:0006287">
    <property type="term" value="P:base-excision repair, gap-filling"/>
    <property type="evidence" value="ECO:0007669"/>
    <property type="project" value="TreeGrafter"/>
</dbReference>
<dbReference type="GO" id="GO:0034080">
    <property type="term" value="P:CENP-A containing chromatin assembly"/>
    <property type="evidence" value="ECO:0007669"/>
    <property type="project" value="EnsemblFungi"/>
</dbReference>
<dbReference type="GO" id="GO:0140529">
    <property type="term" value="P:CMG complex assembly"/>
    <property type="evidence" value="ECO:0007669"/>
    <property type="project" value="EnsemblFungi"/>
</dbReference>
<dbReference type="GO" id="GO:0045004">
    <property type="term" value="P:DNA replication proofreading"/>
    <property type="evidence" value="ECO:0007669"/>
    <property type="project" value="EnsemblFungi"/>
</dbReference>
<dbReference type="GO" id="GO:0006303">
    <property type="term" value="P:double-strand break repair via nonhomologous end joining"/>
    <property type="evidence" value="ECO:0007669"/>
    <property type="project" value="EnsemblFungi"/>
</dbReference>
<dbReference type="GO" id="GO:0042276">
    <property type="term" value="P:error-prone translesion synthesis"/>
    <property type="evidence" value="ECO:0007669"/>
    <property type="project" value="EnsemblFungi"/>
</dbReference>
<dbReference type="GO" id="GO:0035822">
    <property type="term" value="P:gene conversion"/>
    <property type="evidence" value="ECO:0007669"/>
    <property type="project" value="EnsemblFungi"/>
</dbReference>
<dbReference type="GO" id="GO:0033314">
    <property type="term" value="P:mitotic DNA replication checkpoint signaling"/>
    <property type="evidence" value="ECO:0007669"/>
    <property type="project" value="EnsemblFungi"/>
</dbReference>
<dbReference type="GO" id="GO:1902975">
    <property type="term" value="P:mitotic DNA replication initiation"/>
    <property type="evidence" value="ECO:0007669"/>
    <property type="project" value="EnsemblFungi"/>
</dbReference>
<dbReference type="GO" id="GO:1903460">
    <property type="term" value="P:mitotic DNA replication leading strand elongation"/>
    <property type="evidence" value="ECO:0007669"/>
    <property type="project" value="EnsemblFungi"/>
</dbReference>
<dbReference type="GO" id="GO:0031573">
    <property type="term" value="P:mitotic intra-S DNA damage checkpoint signaling"/>
    <property type="evidence" value="ECO:0007669"/>
    <property type="project" value="EnsemblFungi"/>
</dbReference>
<dbReference type="GO" id="GO:0007064">
    <property type="term" value="P:mitotic sister chromatid cohesion"/>
    <property type="evidence" value="ECO:0007669"/>
    <property type="project" value="EnsemblFungi"/>
</dbReference>
<dbReference type="GO" id="GO:0006297">
    <property type="term" value="P:nucleotide-excision repair, DNA gap filling"/>
    <property type="evidence" value="ECO:0007669"/>
    <property type="project" value="EnsemblFungi"/>
</dbReference>
<dbReference type="GO" id="GO:0031048">
    <property type="term" value="P:regulatory ncRNA-mediated heterochromatin formation"/>
    <property type="evidence" value="ECO:0007669"/>
    <property type="project" value="EnsemblFungi"/>
</dbReference>
<dbReference type="CDD" id="cd05779">
    <property type="entry name" value="DNA_polB_epsilon_exo"/>
    <property type="match status" value="1"/>
</dbReference>
<dbReference type="CDD" id="cd05535">
    <property type="entry name" value="POLBc_epsilon"/>
    <property type="match status" value="1"/>
</dbReference>
<dbReference type="FunFam" id="1.10.132.60:FF:000002">
    <property type="entry name" value="DNA polymerase epsilon catalytic subunit"/>
    <property type="match status" value="1"/>
</dbReference>
<dbReference type="FunFam" id="3.30.420.10:FF:000010">
    <property type="entry name" value="DNA polymerase epsilon catalytic subunit"/>
    <property type="match status" value="1"/>
</dbReference>
<dbReference type="FunFam" id="3.90.1600.10:FF:000006">
    <property type="entry name" value="DNA polymerase epsilon catalytic subunit"/>
    <property type="match status" value="1"/>
</dbReference>
<dbReference type="Gene3D" id="1.10.132.60">
    <property type="entry name" value="DNA polymerase family B, C-terminal domain"/>
    <property type="match status" value="1"/>
</dbReference>
<dbReference type="Gene3D" id="3.30.342.10">
    <property type="entry name" value="DNA Polymerase, chain B, domain 1"/>
    <property type="match status" value="1"/>
</dbReference>
<dbReference type="Gene3D" id="3.90.1600.10">
    <property type="entry name" value="Palm domain of DNA polymerase"/>
    <property type="match status" value="1"/>
</dbReference>
<dbReference type="Gene3D" id="3.30.420.10">
    <property type="entry name" value="Ribonuclease H-like superfamily/Ribonuclease H"/>
    <property type="match status" value="1"/>
</dbReference>
<dbReference type="InterPro" id="IPR006172">
    <property type="entry name" value="DNA-dir_DNA_pol_B"/>
</dbReference>
<dbReference type="InterPro" id="IPR006133">
    <property type="entry name" value="DNA-dir_DNA_pol_B_exonuc"/>
</dbReference>
<dbReference type="InterPro" id="IPR043502">
    <property type="entry name" value="DNA/RNA_pol_sf"/>
</dbReference>
<dbReference type="InterPro" id="IPR042087">
    <property type="entry name" value="DNA_pol_B_thumb"/>
</dbReference>
<dbReference type="InterPro" id="IPR013697">
    <property type="entry name" value="DNA_pol_e_suA_C"/>
</dbReference>
<dbReference type="InterPro" id="IPR023211">
    <property type="entry name" value="DNA_pol_palm_dom_sf"/>
</dbReference>
<dbReference type="InterPro" id="IPR029703">
    <property type="entry name" value="POL2"/>
</dbReference>
<dbReference type="InterPro" id="IPR055191">
    <property type="entry name" value="POL2_thumb"/>
</dbReference>
<dbReference type="InterPro" id="IPR012337">
    <property type="entry name" value="RNaseH-like_sf"/>
</dbReference>
<dbReference type="InterPro" id="IPR036397">
    <property type="entry name" value="RNaseH_sf"/>
</dbReference>
<dbReference type="InterPro" id="IPR054475">
    <property type="entry name" value="Znf-DPOE"/>
</dbReference>
<dbReference type="PANTHER" id="PTHR10670">
    <property type="entry name" value="DNA POLYMERASE EPSILON CATALYTIC SUBUNIT A"/>
    <property type="match status" value="1"/>
</dbReference>
<dbReference type="PANTHER" id="PTHR10670:SF0">
    <property type="entry name" value="DNA POLYMERASE EPSILON CATALYTIC SUBUNIT A"/>
    <property type="match status" value="1"/>
</dbReference>
<dbReference type="Pfam" id="PF03104">
    <property type="entry name" value="DNA_pol_B_exo1"/>
    <property type="match status" value="1"/>
</dbReference>
<dbReference type="Pfam" id="PF08490">
    <property type="entry name" value="DUF1744"/>
    <property type="match status" value="1"/>
</dbReference>
<dbReference type="Pfam" id="PF22634">
    <property type="entry name" value="POL2_thumb"/>
    <property type="match status" value="1"/>
</dbReference>
<dbReference type="Pfam" id="PF22912">
    <property type="entry name" value="zf-DPOE"/>
    <property type="match status" value="1"/>
</dbReference>
<dbReference type="Pfam" id="PF23250">
    <property type="entry name" value="zf_DPOE_2"/>
    <property type="match status" value="1"/>
</dbReference>
<dbReference type="SMART" id="SM01159">
    <property type="entry name" value="DUF1744"/>
    <property type="match status" value="1"/>
</dbReference>
<dbReference type="SMART" id="SM00486">
    <property type="entry name" value="POLBc"/>
    <property type="match status" value="1"/>
</dbReference>
<dbReference type="SUPFAM" id="SSF56672">
    <property type="entry name" value="DNA/RNA polymerases"/>
    <property type="match status" value="1"/>
</dbReference>
<dbReference type="SUPFAM" id="SSF53098">
    <property type="entry name" value="Ribonuclease H-like"/>
    <property type="match status" value="1"/>
</dbReference>
<feature type="chain" id="PRO_0000046461" description="DNA polymerase epsilon catalytic subunit A">
    <location>
        <begin position="1"/>
        <end position="2226"/>
    </location>
</feature>
<feature type="zinc finger region" description="CysA-type" evidence="2">
    <location>
        <begin position="2112"/>
        <end position="2137"/>
    </location>
</feature>
<feature type="region of interest" description="Disordered" evidence="3">
    <location>
        <begin position="1240"/>
        <end position="1265"/>
    </location>
</feature>
<feature type="short sequence motif" description="CysB motif" evidence="2">
    <location>
        <begin position="2168"/>
        <end position="2185"/>
    </location>
</feature>
<feature type="binding site" evidence="2">
    <location>
        <position position="2112"/>
    </location>
    <ligand>
        <name>Zn(2+)</name>
        <dbReference type="ChEBI" id="CHEBI:29105"/>
    </ligand>
</feature>
<feature type="binding site" evidence="2">
    <location>
        <position position="2115"/>
    </location>
    <ligand>
        <name>Zn(2+)</name>
        <dbReference type="ChEBI" id="CHEBI:29105"/>
    </ligand>
</feature>
<feature type="binding site" evidence="2">
    <location>
        <position position="2134"/>
    </location>
    <ligand>
        <name>Zn(2+)</name>
        <dbReference type="ChEBI" id="CHEBI:29105"/>
    </ligand>
</feature>
<feature type="binding site" evidence="2">
    <location>
        <position position="2137"/>
    </location>
    <ligand>
        <name>Zn(2+)</name>
        <dbReference type="ChEBI" id="CHEBI:29105"/>
    </ligand>
</feature>
<feature type="binding site" evidence="2">
    <location>
        <position position="2168"/>
    </location>
    <ligand>
        <name>[4Fe-4S] cluster</name>
        <dbReference type="ChEBI" id="CHEBI:49883"/>
    </ligand>
</feature>
<feature type="binding site" evidence="2">
    <location>
        <position position="2171"/>
    </location>
    <ligand>
        <name>[4Fe-4S] cluster</name>
        <dbReference type="ChEBI" id="CHEBI:49883"/>
    </ligand>
</feature>
<feature type="binding site" evidence="2">
    <location>
        <position position="2183"/>
    </location>
    <ligand>
        <name>[4Fe-4S] cluster</name>
        <dbReference type="ChEBI" id="CHEBI:49883"/>
    </ligand>
</feature>
<feature type="binding site" evidence="2">
    <location>
        <position position="2185"/>
    </location>
    <ligand>
        <name>[4Fe-4S] cluster</name>
        <dbReference type="ChEBI" id="CHEBI:49883"/>
    </ligand>
</feature>
<gene>
    <name type="primary">POL2</name>
    <name type="ordered locus">DEHA2E22000g</name>
</gene>
<proteinExistence type="inferred from homology"/>
<reference key="1">
    <citation type="journal article" date="2004" name="Nature">
        <title>Genome evolution in yeasts.</title>
        <authorList>
            <person name="Dujon B."/>
            <person name="Sherman D."/>
            <person name="Fischer G."/>
            <person name="Durrens P."/>
            <person name="Casaregola S."/>
            <person name="Lafontaine I."/>
            <person name="de Montigny J."/>
            <person name="Marck C."/>
            <person name="Neuveglise C."/>
            <person name="Talla E."/>
            <person name="Goffard N."/>
            <person name="Frangeul L."/>
            <person name="Aigle M."/>
            <person name="Anthouard V."/>
            <person name="Babour A."/>
            <person name="Barbe V."/>
            <person name="Barnay S."/>
            <person name="Blanchin S."/>
            <person name="Beckerich J.-M."/>
            <person name="Beyne E."/>
            <person name="Bleykasten C."/>
            <person name="Boisrame A."/>
            <person name="Boyer J."/>
            <person name="Cattolico L."/>
            <person name="Confanioleri F."/>
            <person name="de Daruvar A."/>
            <person name="Despons L."/>
            <person name="Fabre E."/>
            <person name="Fairhead C."/>
            <person name="Ferry-Dumazet H."/>
            <person name="Groppi A."/>
            <person name="Hantraye F."/>
            <person name="Hennequin C."/>
            <person name="Jauniaux N."/>
            <person name="Joyet P."/>
            <person name="Kachouri R."/>
            <person name="Kerrest A."/>
            <person name="Koszul R."/>
            <person name="Lemaire M."/>
            <person name="Lesur I."/>
            <person name="Ma L."/>
            <person name="Muller H."/>
            <person name="Nicaud J.-M."/>
            <person name="Nikolski M."/>
            <person name="Oztas S."/>
            <person name="Ozier-Kalogeropoulos O."/>
            <person name="Pellenz S."/>
            <person name="Potier S."/>
            <person name="Richard G.-F."/>
            <person name="Straub M.-L."/>
            <person name="Suleau A."/>
            <person name="Swennen D."/>
            <person name="Tekaia F."/>
            <person name="Wesolowski-Louvel M."/>
            <person name="Westhof E."/>
            <person name="Wirth B."/>
            <person name="Zeniou-Meyer M."/>
            <person name="Zivanovic Y."/>
            <person name="Bolotin-Fukuhara M."/>
            <person name="Thierry A."/>
            <person name="Bouchier C."/>
            <person name="Caudron B."/>
            <person name="Scarpelli C."/>
            <person name="Gaillardin C."/>
            <person name="Weissenbach J."/>
            <person name="Wincker P."/>
            <person name="Souciet J.-L."/>
        </authorList>
    </citation>
    <scope>NUCLEOTIDE SEQUENCE [LARGE SCALE GENOMIC DNA]</scope>
    <source>
        <strain>ATCC 36239 / CBS 767 / BCRC 21394 / JCM 1990 / NBRC 0083 / IGC 2968</strain>
    </source>
</reference>
<evidence type="ECO:0000250" key="1"/>
<evidence type="ECO:0000250" key="2">
    <source>
        <dbReference type="UniProtKB" id="P15436"/>
    </source>
</evidence>
<evidence type="ECO:0000256" key="3">
    <source>
        <dbReference type="SAM" id="MobiDB-lite"/>
    </source>
</evidence>
<evidence type="ECO:0000305" key="4"/>
<keyword id="KW-0004">4Fe-4S</keyword>
<keyword id="KW-0235">DNA replication</keyword>
<keyword id="KW-0238">DNA-binding</keyword>
<keyword id="KW-0239">DNA-directed DNA polymerase</keyword>
<keyword id="KW-0408">Iron</keyword>
<keyword id="KW-0411">Iron-sulfur</keyword>
<keyword id="KW-0479">Metal-binding</keyword>
<keyword id="KW-0548">Nucleotidyltransferase</keyword>
<keyword id="KW-0539">Nucleus</keyword>
<keyword id="KW-1185">Reference proteome</keyword>
<keyword id="KW-0808">Transferase</keyword>
<keyword id="KW-0862">Zinc</keyword>
<keyword id="KW-0863">Zinc-finger</keyword>
<organism>
    <name type="scientific">Debaryomyces hansenii (strain ATCC 36239 / CBS 767 / BCRC 21394 / JCM 1990 / NBRC 0083 / IGC 2968)</name>
    <name type="common">Yeast</name>
    <name type="synonym">Torulaspora hansenii</name>
    <dbReference type="NCBI Taxonomy" id="284592"/>
    <lineage>
        <taxon>Eukaryota</taxon>
        <taxon>Fungi</taxon>
        <taxon>Dikarya</taxon>
        <taxon>Ascomycota</taxon>
        <taxon>Saccharomycotina</taxon>
        <taxon>Pichiomycetes</taxon>
        <taxon>Debaryomycetaceae</taxon>
        <taxon>Debaryomyces</taxon>
    </lineage>
</organism>